<dbReference type="EMBL" id="AF132599">
    <property type="protein sequence ID" value="AAD26864.1"/>
    <property type="molecule type" value="mRNA"/>
</dbReference>
<dbReference type="EMBL" id="AF150628">
    <property type="protein sequence ID" value="AAD34020.1"/>
    <property type="molecule type" value="mRNA"/>
</dbReference>
<dbReference type="EMBL" id="BC013946">
    <property type="protein sequence ID" value="AAH13946.1"/>
    <property type="molecule type" value="mRNA"/>
</dbReference>
<dbReference type="EMBL" id="BC010438">
    <property type="protein sequence ID" value="AAH10438.1"/>
    <property type="molecule type" value="mRNA"/>
</dbReference>
<dbReference type="EMBL" id="BC012741">
    <property type="protein sequence ID" value="AAH12741.1"/>
    <property type="molecule type" value="mRNA"/>
</dbReference>
<dbReference type="CCDS" id="CCDS10025.1"/>
<dbReference type="RefSeq" id="NP_001289390.1">
    <property type="nucleotide sequence ID" value="NM_001302461.1"/>
</dbReference>
<dbReference type="RefSeq" id="NP_057079.2">
    <property type="nucleotide sequence ID" value="NM_015995.3"/>
</dbReference>
<dbReference type="SMR" id="Q9Y2Y9"/>
<dbReference type="BioGRID" id="119642">
    <property type="interactions" value="19"/>
</dbReference>
<dbReference type="ELM" id="Q9Y2Y9"/>
<dbReference type="FunCoup" id="Q9Y2Y9">
    <property type="interactions" value="326"/>
</dbReference>
<dbReference type="IntAct" id="Q9Y2Y9">
    <property type="interactions" value="7"/>
</dbReference>
<dbReference type="MINT" id="Q9Y2Y9"/>
<dbReference type="STRING" id="9606.ENSP00000302456"/>
<dbReference type="iPTMnet" id="Q9Y2Y9"/>
<dbReference type="PhosphoSitePlus" id="Q9Y2Y9"/>
<dbReference type="BioMuta" id="KLF13"/>
<dbReference type="DMDM" id="17369913"/>
<dbReference type="jPOST" id="Q9Y2Y9"/>
<dbReference type="MassIVE" id="Q9Y2Y9"/>
<dbReference type="PaxDb" id="9606-ENSP00000302456"/>
<dbReference type="PeptideAtlas" id="Q9Y2Y9"/>
<dbReference type="ProteomicsDB" id="85939"/>
<dbReference type="Pumba" id="Q9Y2Y9"/>
<dbReference type="Antibodypedia" id="9456">
    <property type="antibodies" value="176 antibodies from 32 providers"/>
</dbReference>
<dbReference type="DNASU" id="51621"/>
<dbReference type="Ensembl" id="ENST00000307145.4">
    <property type="protein sequence ID" value="ENSP00000302456.3"/>
    <property type="gene ID" value="ENSG00000169926.11"/>
</dbReference>
<dbReference type="Ensembl" id="ENST00000621843.1">
    <property type="protein sequence ID" value="ENSP00000484904.1"/>
    <property type="gene ID" value="ENSG00000275746.1"/>
</dbReference>
<dbReference type="GeneID" id="51621"/>
<dbReference type="KEGG" id="hsa:51621"/>
<dbReference type="MANE-Select" id="ENST00000307145.4">
    <property type="protein sequence ID" value="ENSP00000302456.3"/>
    <property type="RefSeq nucleotide sequence ID" value="NM_015995.4"/>
    <property type="RefSeq protein sequence ID" value="NP_057079.2"/>
</dbReference>
<dbReference type="AGR" id="HGNC:13672"/>
<dbReference type="CTD" id="51621"/>
<dbReference type="DisGeNET" id="51621"/>
<dbReference type="GeneCards" id="KLF13"/>
<dbReference type="GeneReviews" id="KLF13"/>
<dbReference type="HGNC" id="HGNC:13672">
    <property type="gene designation" value="KLF13"/>
</dbReference>
<dbReference type="HPA" id="ENSG00000169926">
    <property type="expression patterns" value="Low tissue specificity"/>
</dbReference>
<dbReference type="MalaCards" id="KLF13"/>
<dbReference type="MIM" id="605328">
    <property type="type" value="gene"/>
</dbReference>
<dbReference type="neXtProt" id="NX_Q9Y2Y9"/>
<dbReference type="OpenTargets" id="ENSG00000169926"/>
<dbReference type="PharmGKB" id="PA30133"/>
<dbReference type="VEuPathDB" id="HostDB:ENSG00000169926"/>
<dbReference type="eggNOG" id="KOG1721">
    <property type="taxonomic scope" value="Eukaryota"/>
</dbReference>
<dbReference type="GeneTree" id="ENSGT00940000161911"/>
<dbReference type="HOGENOM" id="CLU_002678_33_2_1"/>
<dbReference type="InParanoid" id="Q9Y2Y9"/>
<dbReference type="OMA" id="KHRCHYA"/>
<dbReference type="OrthoDB" id="6365676at2759"/>
<dbReference type="PAN-GO" id="Q9Y2Y9">
    <property type="GO annotations" value="3 GO annotations based on evolutionary models"/>
</dbReference>
<dbReference type="PhylomeDB" id="Q9Y2Y9"/>
<dbReference type="TreeFam" id="TF351003"/>
<dbReference type="PathwayCommons" id="Q9Y2Y9"/>
<dbReference type="SignaLink" id="Q9Y2Y9"/>
<dbReference type="SIGNOR" id="Q9Y2Y9"/>
<dbReference type="BioGRID-ORCS" id="51621">
    <property type="hits" value="18 hits in 1177 CRISPR screens"/>
</dbReference>
<dbReference type="ChiTaRS" id="KLF13">
    <property type="organism name" value="human"/>
</dbReference>
<dbReference type="GeneWiki" id="KLF13"/>
<dbReference type="GenomeRNAi" id="51621"/>
<dbReference type="Pharos" id="Q9Y2Y9">
    <property type="development level" value="Tbio"/>
</dbReference>
<dbReference type="PRO" id="PR:Q9Y2Y9"/>
<dbReference type="Proteomes" id="UP000005640">
    <property type="component" value="Chromosome 15"/>
</dbReference>
<dbReference type="RNAct" id="Q9Y2Y9">
    <property type="molecule type" value="protein"/>
</dbReference>
<dbReference type="Bgee" id="ENSG00000169926">
    <property type="expression patterns" value="Expressed in right hemisphere of cerebellum and 99 other cell types or tissues"/>
</dbReference>
<dbReference type="ExpressionAtlas" id="Q9Y2Y9">
    <property type="expression patterns" value="baseline and differential"/>
</dbReference>
<dbReference type="GO" id="GO:0000785">
    <property type="term" value="C:chromatin"/>
    <property type="evidence" value="ECO:0000247"/>
    <property type="project" value="NTNU_SB"/>
</dbReference>
<dbReference type="GO" id="GO:0005634">
    <property type="term" value="C:nucleus"/>
    <property type="evidence" value="ECO:0007669"/>
    <property type="project" value="UniProtKB-SubCell"/>
</dbReference>
<dbReference type="GO" id="GO:0001228">
    <property type="term" value="F:DNA-binding transcription activator activity, RNA polymerase II-specific"/>
    <property type="evidence" value="ECO:0007669"/>
    <property type="project" value="Ensembl"/>
</dbReference>
<dbReference type="GO" id="GO:0000981">
    <property type="term" value="F:DNA-binding transcription factor activity, RNA polymerase II-specific"/>
    <property type="evidence" value="ECO:0000247"/>
    <property type="project" value="NTNU_SB"/>
</dbReference>
<dbReference type="GO" id="GO:0000978">
    <property type="term" value="F:RNA polymerase II cis-regulatory region sequence-specific DNA binding"/>
    <property type="evidence" value="ECO:0000318"/>
    <property type="project" value="GO_Central"/>
</dbReference>
<dbReference type="GO" id="GO:1990837">
    <property type="term" value="F:sequence-specific double-stranded DNA binding"/>
    <property type="evidence" value="ECO:0000314"/>
    <property type="project" value="ARUK-UCL"/>
</dbReference>
<dbReference type="GO" id="GO:0008270">
    <property type="term" value="F:zinc ion binding"/>
    <property type="evidence" value="ECO:0007669"/>
    <property type="project" value="UniProtKB-KW"/>
</dbReference>
<dbReference type="GO" id="GO:0008285">
    <property type="term" value="P:negative regulation of cell population proliferation"/>
    <property type="evidence" value="ECO:0007669"/>
    <property type="project" value="Ensembl"/>
</dbReference>
<dbReference type="GO" id="GO:0045647">
    <property type="term" value="P:negative regulation of erythrocyte differentiation"/>
    <property type="evidence" value="ECO:0007669"/>
    <property type="project" value="Ensembl"/>
</dbReference>
<dbReference type="GO" id="GO:0006357">
    <property type="term" value="P:regulation of transcription by RNA polymerase II"/>
    <property type="evidence" value="ECO:0000318"/>
    <property type="project" value="GO_Central"/>
</dbReference>
<dbReference type="GO" id="GO:0006366">
    <property type="term" value="P:transcription by RNA polymerase II"/>
    <property type="evidence" value="ECO:0000304"/>
    <property type="project" value="ProtInc"/>
</dbReference>
<dbReference type="CDD" id="cd21571">
    <property type="entry name" value="KLF13_N"/>
    <property type="match status" value="1"/>
</dbReference>
<dbReference type="FunFam" id="3.30.160.60:FF:000018">
    <property type="entry name" value="Krueppel-like factor 15"/>
    <property type="match status" value="1"/>
</dbReference>
<dbReference type="FunFam" id="3.30.160.60:FF:000232">
    <property type="entry name" value="Krueppel-like factor 9"/>
    <property type="match status" value="1"/>
</dbReference>
<dbReference type="FunFam" id="3.30.160.60:FF:000521">
    <property type="entry name" value="Krueppel-like factor 9"/>
    <property type="match status" value="1"/>
</dbReference>
<dbReference type="Gene3D" id="3.30.160.60">
    <property type="entry name" value="Classic Zinc Finger"/>
    <property type="match status" value="3"/>
</dbReference>
<dbReference type="InterPro" id="IPR036236">
    <property type="entry name" value="Znf_C2H2_sf"/>
</dbReference>
<dbReference type="InterPro" id="IPR013087">
    <property type="entry name" value="Znf_C2H2_type"/>
</dbReference>
<dbReference type="PANTHER" id="PTHR23235:SF21">
    <property type="entry name" value="KRUEPPEL-LIKE FACTOR 13"/>
    <property type="match status" value="1"/>
</dbReference>
<dbReference type="PANTHER" id="PTHR23235">
    <property type="entry name" value="KRUEPPEL-LIKE TRANSCRIPTION FACTOR"/>
    <property type="match status" value="1"/>
</dbReference>
<dbReference type="Pfam" id="PF00096">
    <property type="entry name" value="zf-C2H2"/>
    <property type="match status" value="3"/>
</dbReference>
<dbReference type="SMART" id="SM00355">
    <property type="entry name" value="ZnF_C2H2"/>
    <property type="match status" value="3"/>
</dbReference>
<dbReference type="SUPFAM" id="SSF57667">
    <property type="entry name" value="beta-beta-alpha zinc fingers"/>
    <property type="match status" value="2"/>
</dbReference>
<dbReference type="PROSITE" id="PS00028">
    <property type="entry name" value="ZINC_FINGER_C2H2_1"/>
    <property type="match status" value="3"/>
</dbReference>
<dbReference type="PROSITE" id="PS50157">
    <property type="entry name" value="ZINC_FINGER_C2H2_2"/>
    <property type="match status" value="3"/>
</dbReference>
<gene>
    <name evidence="7" type="primary">KLF13</name>
    <name type="synonym">BTEB3</name>
    <name type="synonym">NSLP1</name>
</gene>
<reference key="1">
    <citation type="journal article" date="1999" name="Immunity">
        <title>RFLAT-1: a new zinc finger transcription factor that activates RANTES gene expression in T lymphocytes.</title>
        <authorList>
            <person name="Song A."/>
            <person name="Chen Y.F."/>
            <person name="Thamatrakoln K."/>
            <person name="Storm T.A."/>
            <person name="Krensky A.M."/>
        </authorList>
    </citation>
    <scope>NUCLEOTIDE SEQUENCE [MRNA]</scope>
</reference>
<reference key="2">
    <citation type="journal article" date="1999" name="Ann. N. Y. Acad. Sci.">
        <title>Sp1 and its likes: biochemical and functional predictions for a growing family of zinc finger transcription factors.</title>
        <authorList>
            <person name="Cook T."/>
            <person name="Gebelein B."/>
            <person name="Urrutia R."/>
        </authorList>
    </citation>
    <scope>NUCLEOTIDE SEQUENCE [MRNA]</scope>
    <source>
        <tissue>Pancreas</tissue>
    </source>
</reference>
<reference key="3">
    <citation type="journal article" date="2004" name="Genome Res.">
        <title>The status, quality, and expansion of the NIH full-length cDNA project: the Mammalian Gene Collection (MGC).</title>
        <authorList>
            <consortium name="The MGC Project Team"/>
        </authorList>
    </citation>
    <scope>NUCLEOTIDE SEQUENCE [LARGE SCALE MRNA]</scope>
    <source>
        <tissue>Lung</tissue>
    </source>
</reference>
<reference key="4">
    <citation type="journal article" date="2001" name="J. Biol. Chem.">
        <title>The Sp1-like protein BTEB3 inhibits transcription via the basic transcription element box by interacting with mSin3A and HDAC-1 co-repressors and competing with Sp1.</title>
        <authorList>
            <person name="Kaczynski J."/>
            <person name="Zhang J.S."/>
            <person name="Ellenrieder V."/>
            <person name="Conley A."/>
            <person name="Duenes T."/>
            <person name="Kester H."/>
            <person name="van Der Burg B."/>
            <person name="Urrutia R."/>
        </authorList>
    </citation>
    <scope>FUNCTION</scope>
</reference>
<reference key="5">
    <citation type="journal article" date="2007" name="J. Immunol.">
        <title>Interaction of PRP4 with Kruppel-like factor 13 regulates CCL5 transcription.</title>
        <authorList>
            <person name="Huang B."/>
            <person name="Ahn Y.T."/>
            <person name="McPherson L."/>
            <person name="Clayberger C."/>
            <person name="Krensky A.M."/>
        </authorList>
    </citation>
    <scope>FUNCTION</scope>
    <scope>PHOSPHORYLATION BY PRP4K</scope>
    <scope>SUBCELLULAR LOCATION</scope>
</reference>
<reference key="6">
    <citation type="journal article" date="2013" name="J. Proteome Res.">
        <title>Toward a comprehensive characterization of a human cancer cell phosphoproteome.</title>
        <authorList>
            <person name="Zhou H."/>
            <person name="Di Palma S."/>
            <person name="Preisinger C."/>
            <person name="Peng M."/>
            <person name="Polat A.N."/>
            <person name="Heck A.J."/>
            <person name="Mohammed S."/>
        </authorList>
    </citation>
    <scope>PHOSPHORYLATION [LARGE SCALE ANALYSIS] AT SER-268 AND SER-270</scope>
    <scope>IDENTIFICATION BY MASS SPECTROMETRY [LARGE SCALE ANALYSIS]</scope>
    <source>
        <tissue>Cervix carcinoma</tissue>
    </source>
</reference>
<name>KLF13_HUMAN</name>
<proteinExistence type="evidence at protein level"/>
<protein>
    <recommendedName>
        <fullName>Krueppel-like factor 13</fullName>
    </recommendedName>
    <alternativeName>
        <fullName>Basic transcription element-binding protein 3</fullName>
        <shortName>BTE-binding protein 3</shortName>
    </alternativeName>
    <alternativeName>
        <fullName>Novel Sp1-like zinc finger transcription factor 1</fullName>
    </alternativeName>
    <alternativeName>
        <fullName>RANTES factor of late activated T-lymphocytes 1</fullName>
        <shortName>RFLAT-1</shortName>
    </alternativeName>
    <alternativeName>
        <fullName>Transcription factor BTEB3</fullName>
    </alternativeName>
    <alternativeName>
        <fullName>Transcription factor NSLP1</fullName>
    </alternativeName>
</protein>
<feature type="chain" id="PRO_0000047184" description="Krueppel-like factor 13">
    <location>
        <begin position="1"/>
        <end position="288"/>
    </location>
</feature>
<feature type="zinc finger region" description="C2H2-type 1" evidence="2">
    <location>
        <begin position="167"/>
        <end position="191"/>
    </location>
</feature>
<feature type="zinc finger region" description="C2H2-type 2" evidence="2">
    <location>
        <begin position="197"/>
        <end position="221"/>
    </location>
</feature>
<feature type="zinc finger region" description="C2H2-type 3" evidence="2">
    <location>
        <begin position="227"/>
        <end position="249"/>
    </location>
</feature>
<feature type="region of interest" description="Disordered" evidence="3">
    <location>
        <begin position="23"/>
        <end position="57"/>
    </location>
</feature>
<feature type="region of interest" description="Disordered" evidence="3">
    <location>
        <begin position="71"/>
        <end position="166"/>
    </location>
</feature>
<feature type="region of interest" description="Disordered" evidence="3">
    <location>
        <begin position="249"/>
        <end position="288"/>
    </location>
</feature>
<feature type="compositionally biased region" description="Basic and acidic residues" evidence="3">
    <location>
        <begin position="26"/>
        <end position="35"/>
    </location>
</feature>
<feature type="compositionally biased region" description="Basic and acidic residues" evidence="3">
    <location>
        <begin position="48"/>
        <end position="57"/>
    </location>
</feature>
<feature type="compositionally biased region" description="Pro residues" evidence="3">
    <location>
        <begin position="97"/>
        <end position="106"/>
    </location>
</feature>
<feature type="compositionally biased region" description="Low complexity" evidence="3">
    <location>
        <begin position="107"/>
        <end position="124"/>
    </location>
</feature>
<feature type="compositionally biased region" description="Low complexity" evidence="3">
    <location>
        <begin position="266"/>
        <end position="288"/>
    </location>
</feature>
<feature type="modified residue" description="Phosphoserine" evidence="8">
    <location>
        <position position="268"/>
    </location>
</feature>
<feature type="modified residue" description="Phosphoserine" evidence="8">
    <location>
        <position position="270"/>
    </location>
</feature>
<feature type="modified residue" description="Phosphoserine" evidence="1">
    <location>
        <position position="279"/>
    </location>
</feature>
<feature type="modified residue" description="Phosphoserine" evidence="1">
    <location>
        <position position="283"/>
    </location>
</feature>
<feature type="modified residue" description="Phosphoserine" evidence="1">
    <location>
        <position position="287"/>
    </location>
</feature>
<feature type="sequence conflict" description="In Ref. 2; AAD34020." evidence="6" ref="2">
    <original>A</original>
    <variation>S</variation>
    <location>
        <position position="39"/>
    </location>
</feature>
<feature type="sequence conflict" description="In Ref. 2; AAD34020." evidence="6" ref="2">
    <original>EPTSPGAEGAA</original>
    <variation>MSPPPPALKARR</variation>
    <location>
        <begin position="104"/>
        <end position="114"/>
    </location>
</feature>
<evidence type="ECO:0000250" key="1">
    <source>
        <dbReference type="UniProtKB" id="Q9JJZ6"/>
    </source>
</evidence>
<evidence type="ECO:0000255" key="2">
    <source>
        <dbReference type="PROSITE-ProRule" id="PRU00042"/>
    </source>
</evidence>
<evidence type="ECO:0000256" key="3">
    <source>
        <dbReference type="SAM" id="MobiDB-lite"/>
    </source>
</evidence>
<evidence type="ECO:0000269" key="4">
    <source>
    </source>
</evidence>
<evidence type="ECO:0000269" key="5">
    <source>
    </source>
</evidence>
<evidence type="ECO:0000305" key="6"/>
<evidence type="ECO:0000312" key="7">
    <source>
        <dbReference type="HGNC" id="HGNC:13672"/>
    </source>
</evidence>
<evidence type="ECO:0007744" key="8">
    <source>
    </source>
</evidence>
<organism>
    <name type="scientific">Homo sapiens</name>
    <name type="common">Human</name>
    <dbReference type="NCBI Taxonomy" id="9606"/>
    <lineage>
        <taxon>Eukaryota</taxon>
        <taxon>Metazoa</taxon>
        <taxon>Chordata</taxon>
        <taxon>Craniata</taxon>
        <taxon>Vertebrata</taxon>
        <taxon>Euteleostomi</taxon>
        <taxon>Mammalia</taxon>
        <taxon>Eutheria</taxon>
        <taxon>Euarchontoglires</taxon>
        <taxon>Primates</taxon>
        <taxon>Haplorrhini</taxon>
        <taxon>Catarrhini</taxon>
        <taxon>Hominidae</taxon>
        <taxon>Homo</taxon>
    </lineage>
</organism>
<comment type="function">
    <text evidence="1 4 5">Transcription factor that activates expression from GC-rich minimal promoter regions, including genes in the cells of the erythroid lineage (By similarity). Represses transcription by binding to the BTE site, a GC-rich DNA element, in competition with the activator SP1. It also represses transcription by interacting with the corepressor Sin3A and HDAC1 (PubMed:11477107). Activates RANTES and CCL5 expression in T-cells (PubMed:17513757).</text>
</comment>
<comment type="interaction">
    <interactant intactId="EBI-1255893">
        <id>Q9Y2Y9</id>
    </interactant>
    <interactant intactId="EBI-7049352">
        <id>P43694</id>
        <label>GATA4</label>
    </interactant>
    <organismsDiffer>false</organismsDiffer>
    <experiments>3</experiments>
</comment>
<comment type="interaction">
    <interactant intactId="EBI-1255893">
        <id>Q9Y2Y9</id>
    </interactant>
    <interactant intactId="EBI-395940">
        <id>Q13523</id>
        <label>PRP4K</label>
    </interactant>
    <organismsDiffer>false</organismsDiffer>
    <experiments>5</experiments>
</comment>
<comment type="subcellular location">
    <subcellularLocation>
        <location evidence="5">Nucleus</location>
    </subcellularLocation>
</comment>
<comment type="tissue specificity">
    <text>Ubiquitous.</text>
</comment>
<comment type="domain">
    <text>The Ala/Pro-rich domain may contain discrete activation and repression subdomains and also can mediate protein-protein interactions.</text>
</comment>
<comment type="PTM">
    <text evidence="5">Phosphorylated by PRP4K; phosphorylation regulates its transcriptional modulator activity.</text>
</comment>
<comment type="similarity">
    <text evidence="6">Belongs to the Sp1 C2H2-type zinc-finger protein family.</text>
</comment>
<sequence length="288" mass="31180">MAAAAYVDHFAAECLVSMSSRAVVHGPREGPESRPEGAAVAATPTLPRVEERRDGKDSASLFVVARILADLNQQAPAPAPAERREGAAARKARTPCRLPPPAPEPTSPGAEGAAAAPPSPAWSEPEPEAGLEPEREPGPAGSGEPGLRQRVRRGRSRADLESPQRKHKCHYAGCEKVYGKSSHLKAHLRTHTGERPFACSWQDCNKKFARSDELARHYRTHTGEKKFSCPICEKRFMRSDHLTKHARRHANFHPGMLQRRGGGSRTGSLSDYSRSDASSPTISPASSP</sequence>
<accession>Q9Y2Y9</accession>
<accession>Q9Y356</accession>
<keyword id="KW-0010">Activator</keyword>
<keyword id="KW-0238">DNA-binding</keyword>
<keyword id="KW-0479">Metal-binding</keyword>
<keyword id="KW-0539">Nucleus</keyword>
<keyword id="KW-0597">Phosphoprotein</keyword>
<keyword id="KW-1267">Proteomics identification</keyword>
<keyword id="KW-1185">Reference proteome</keyword>
<keyword id="KW-0677">Repeat</keyword>
<keyword id="KW-0678">Repressor</keyword>
<keyword id="KW-0804">Transcription</keyword>
<keyword id="KW-0805">Transcription regulation</keyword>
<keyword id="KW-0862">Zinc</keyword>
<keyword id="KW-0863">Zinc-finger</keyword>